<accession>P41233</accession>
<accession>B1AWZ8</accession>
<organism>
    <name type="scientific">Mus musculus</name>
    <name type="common">Mouse</name>
    <dbReference type="NCBI Taxonomy" id="10090"/>
    <lineage>
        <taxon>Eukaryota</taxon>
        <taxon>Metazoa</taxon>
        <taxon>Chordata</taxon>
        <taxon>Craniata</taxon>
        <taxon>Vertebrata</taxon>
        <taxon>Euteleostomi</taxon>
        <taxon>Mammalia</taxon>
        <taxon>Eutheria</taxon>
        <taxon>Euarchontoglires</taxon>
        <taxon>Glires</taxon>
        <taxon>Rodentia</taxon>
        <taxon>Myomorpha</taxon>
        <taxon>Muroidea</taxon>
        <taxon>Muridae</taxon>
        <taxon>Murinae</taxon>
        <taxon>Mus</taxon>
        <taxon>Mus</taxon>
    </lineage>
</organism>
<sequence>MACWPQLRLLLWKNLTFRRRQTCQLLLEVAWPLFIFLILISVRLSYPPYEQHECHFPNKAMPSAGTLPWVQGIICNANNPCFRYPTPGEAPGVVGNFNKSIVSRLFSDAQRLLLYSQRDTSIKDMHKVLRMLRQIKHPNSNLKLQDFLVDNETFSGFLQHNLSLPRSTVDSLLQANVGLQKVFLQGYQLHLASLCNGSKLEEIIQLGDAEVSALCGLPRKKLDAAERVLRYNMDILKPVVTKLNSTSHLPTQHLAEATTVLLDSLGGLAQELFSTKSWSDMRQEVMFLTNVNSSSSSTQIYQAVSRIVCGHPEGGGLKIKSLNWYEDNNYKALFGGNNTEEDVDTFYDNSTTPYCNDLMKNLESSPLSRIIWKALKPLLVGKILYTPDTPATRQVMAEVNKTFQELAVFHDLEGMWEELSPQIWTFMENSQEMDLVRTLLDSRGNDQFWEQKLDGLDWTAQDIMAFLAKNPEDVQSPNGSVYTWREAFNETNQAIQTISRFMECVNLNKLEPIPTEVRLINKSMELLDERKFWAGIVFTGITPDSVELPHHVKYKIRMDIDNVERTNKIKDGYWDPGPRADPFEDMRYVWGGFAYLQDVVEQAIIRVLTGSEKKTGVYVQQMPYPCYVDDIFLRVMSRSMPLFMTLAWIYSVAVIIKSIVYEKEARLKETMRIMGLDNGILWFSWFVSSLIPLLVSAGLLVVILKLGNLLPYSDPSVVFVFLSVFAMVTILQCFLISTLFSRANLAAACGGIIYFTLYLPYVLCVAWQDYVGFSIKIFASLLSPVAFGFGCEYFALFEEQGIGVQWDNLFESPVEEDGFNLTTAVSMMLFDTFLYGVMTWYIEAVFPGQYGIPRPWYFPCTKSYWFGEEIDEKSHPGSSQKGVSEICMEEEPTHLRLGVSIQNLVKVYRDGMKVAVDGLALNFYEGQITSFLGHNGAGKTTTMSILTGLFPPTSGTAYILGKDIRSEMSSIRQNLGVCPQHNVLFDMLTVEEHIWFYARLKGLSEKHVKAEMEQMALDVGLPPSKLKSKTSQLSGGMQRKLSVALAFVGGSKVVILDEPTAGVDPYSRRGIWELLLKYRQGRTIILSTHHMDEADILGDRIAIISHGKLCCVGSSLFLKNQLGTGYYLTLVKKDVESSLSSCRNSSSTVSCLKKEDSVSQSSSDAGLGSDHESDTLTIDVSAISNLIRKHVSEARLVEDIGHELTYVLPYEAAKEGAFVELFHEIDDRLSDLGISSYGISETTLEEIFLKVAEESGVDAETSDGTLPARRNRRAFGDKQSCLHPFTEDDAVDPNDSDIDPESRETDLLSGMDGKGSYQLKGWKLTQQQFVALLWKRLLIARRSRKGFFAQIVLPAVFVCIALVFSLIVPPFGKYPSLELQPWMYNEQYTFVSNDAPEDMGTQELLNALTKDPGFGTRCMEGNPIPDTPCLAGEEDWTISPVPQSIVDLFQNGNWTMKNPSPACQCSSDKIKKMLPVCPPGAGGLPPPQRKQKTADILQNLTGRNISDYLVKTYVQIIAKSLKNKIWVNEFRYGGFSLGVSNSQALPPSHEVNDAIKQMKKLLKLTKDSSADRFLSSLGRFMAGLDTKNNVKVWFNNKGWHAISSFLNVINNAILRANLQKGENPSQYGITAFNHPLNLTKQQLSEVALMTTSVDVLVSICVIFAMSFVPASFVVFLIQERVSKAKHLQFISGVKPVIYWLSNFVWDMCNYVVPATLVIIIFICFQQKSYVSSTNLPVLALLLLLYGWSITPLMYPASFVFKIPSTAYVVLTSVNLFIGINGSVATFVLELFTNNKLNDINDILKSVFLIFPHFCLGRGLIDMVKNQAMADALERFGENRFVSPLSWDLVGRNLFAMAVEGVVFFLITVLIQYRFFIRPRPVKAKLPPLNDEDEDVRRERQRILDGGGQNDILEIKELTKIYRRKRKPAVDRICIGIPPGECFGLLGVNGAGKSTTFKMLTGDTPVTRGDAFLNKNSILSNIHEVHQNMGYCPQFDAITELLTGREHVEFFALLRGVPEKEVGKVGEWAIRKLGLVKYGEKYASNYSGGNKRKLSTAMALIGGPPVVFLDEPTTGMDPKARRFLWNCALSIVKEGRSVVLTSHSMEECEALCTRMAIMVNGRFRCLGSVQHLKNRFGDGYTIVVRIAGSNPDLKPVQEFFGLAFPGSVLKEKHRNMLQYQLPSSLSSLARIFSILSQSKKRLHIEDYSVSQTTLDQVFVNFAKDQSDDDHLKDLSLHKNQTVVDVAVLTSFLQDEKVKESYV</sequence>
<name>ABCA1_MOUSE</name>
<proteinExistence type="evidence at protein level"/>
<reference key="1">
    <citation type="journal article" date="1994" name="Genomics">
        <title>Cloning of two novel ABC transporters mapping on human chromosome 9.</title>
        <authorList>
            <person name="Luciani M.-F."/>
            <person name="Denizot F."/>
            <person name="Savary S."/>
            <person name="Mattei M.-G."/>
            <person name="Chimini G."/>
        </authorList>
    </citation>
    <scope>NUCLEOTIDE SEQUENCE [MRNA]</scope>
    <source>
        <strain>DBA/2J</strain>
        <tissue>Macrophage</tissue>
    </source>
</reference>
<reference key="2">
    <citation type="journal article" date="2001" name="Genomics">
        <title>Human and mouse ABCA1 comparative sequencing and transgenesis studies revealing novel regulatory sequences.</title>
        <authorList>
            <person name="Qiu Y."/>
            <person name="Cavelier L."/>
            <person name="Chiu S."/>
            <person name="Yang X."/>
            <person name="Rubin E."/>
            <person name="Cheng J.-F."/>
        </authorList>
    </citation>
    <scope>NUCLEOTIDE SEQUENCE [GENOMIC DNA]</scope>
    <source>
        <strain>C57BL/6J</strain>
    </source>
</reference>
<reference key="3">
    <citation type="journal article" date="2009" name="PLoS Biol.">
        <title>Lineage-specific biology revealed by a finished genome assembly of the mouse.</title>
        <authorList>
            <person name="Church D.M."/>
            <person name="Goodstadt L."/>
            <person name="Hillier L.W."/>
            <person name="Zody M.C."/>
            <person name="Goldstein S."/>
            <person name="She X."/>
            <person name="Bult C.J."/>
            <person name="Agarwala R."/>
            <person name="Cherry J.L."/>
            <person name="DiCuccio M."/>
            <person name="Hlavina W."/>
            <person name="Kapustin Y."/>
            <person name="Meric P."/>
            <person name="Maglott D."/>
            <person name="Birtle Z."/>
            <person name="Marques A.C."/>
            <person name="Graves T."/>
            <person name="Zhou S."/>
            <person name="Teague B."/>
            <person name="Potamousis K."/>
            <person name="Churas C."/>
            <person name="Place M."/>
            <person name="Herschleb J."/>
            <person name="Runnheim R."/>
            <person name="Forrest D."/>
            <person name="Amos-Landgraf J."/>
            <person name="Schwartz D.C."/>
            <person name="Cheng Z."/>
            <person name="Lindblad-Toh K."/>
            <person name="Eichler E.E."/>
            <person name="Ponting C.P."/>
        </authorList>
    </citation>
    <scope>NUCLEOTIDE SEQUENCE [LARGE SCALE GENOMIC DNA]</scope>
    <source>
        <strain>C57BL/6J</strain>
    </source>
</reference>
<reference key="4">
    <citation type="submission" date="2005-09" db="EMBL/GenBank/DDBJ databases">
        <authorList>
            <person name="Mural R.J."/>
            <person name="Adams M.D."/>
            <person name="Myers E.W."/>
            <person name="Smith H.O."/>
            <person name="Venter J.C."/>
        </authorList>
    </citation>
    <scope>NUCLEOTIDE SEQUENCE [LARGE SCALE GENOMIC DNA]</scope>
</reference>
<reference key="5">
    <citation type="journal article" date="2002" name="J. Lipid Res.">
        <title>Bacterial lipopolysaccharide induces expression of ABCA1 but not ABCG1 via an LXR-independent pathway.</title>
        <authorList>
            <person name="Kaplan R."/>
            <person name="Gan X."/>
            <person name="Menke J.G."/>
            <person name="Wright S.D."/>
            <person name="Cai T.-Q."/>
        </authorList>
    </citation>
    <scope>INDUCTION BY LIPOPOLYSACCHARIDE</scope>
</reference>
<reference key="6">
    <citation type="journal article" date="2003" name="J. Lipid Res.">
        <title>Endotoxin down-regulates ABCG5 and ABCG8 in mouse liver and ABCA1 and ABCG1 in J774 murine macrophages: differential role of LXR.</title>
        <authorList>
            <person name="Khovidhunkit W."/>
            <person name="Moser A.H."/>
            <person name="Shigenaga J.K."/>
            <person name="Grunfeld C."/>
            <person name="Feingold K.R."/>
        </authorList>
    </citation>
    <scope>DOWN-REGULATION BY ENDOTOXIN</scope>
</reference>
<reference key="7">
    <citation type="journal article" date="2006" name="PLoS ONE">
        <title>Cooperation between engulfment receptors: the case of ABCA1 and MEGF10.</title>
        <authorList>
            <person name="Hamon Y."/>
            <person name="Trompier D."/>
            <person name="Ma Z."/>
            <person name="Venegas V."/>
            <person name="Pophillat M."/>
            <person name="Mignotte V."/>
            <person name="Zhou Z."/>
            <person name="Chimini G."/>
        </authorList>
    </citation>
    <scope>INTERACTION WITH MEGF10</scope>
</reference>
<reference key="8">
    <citation type="journal article" date="2007" name="Proc. Natl. Acad. Sci. U.S.A.">
        <title>Large-scale phosphorylation analysis of mouse liver.</title>
        <authorList>
            <person name="Villen J."/>
            <person name="Beausoleil S.A."/>
            <person name="Gerber S.A."/>
            <person name="Gygi S.P."/>
        </authorList>
    </citation>
    <scope>PHOSPHORYLATION [LARGE SCALE ANALYSIS] AT SER-1296</scope>
    <scope>IDENTIFICATION BY MASS SPECTROMETRY [LARGE SCALE ANALYSIS]</scope>
    <source>
        <tissue>Liver</tissue>
    </source>
</reference>
<reference key="9">
    <citation type="journal article" date="2009" name="Nat. Biotechnol.">
        <title>Mass-spectrometric identification and relative quantification of N-linked cell surface glycoproteins.</title>
        <authorList>
            <person name="Wollscheid B."/>
            <person name="Bausch-Fluck D."/>
            <person name="Henderson C."/>
            <person name="O'Brien R."/>
            <person name="Bibel M."/>
            <person name="Schiess R."/>
            <person name="Aebersold R."/>
            <person name="Watts J.D."/>
        </authorList>
    </citation>
    <scope>GLYCOSYLATION [LARGE SCALE ANALYSIS] AT ASN-489</scope>
</reference>
<reference key="10">
    <citation type="journal article" date="2010" name="Cell">
        <title>A tissue-specific atlas of mouse protein phosphorylation and expression.</title>
        <authorList>
            <person name="Huttlin E.L."/>
            <person name="Jedrychowski M.P."/>
            <person name="Elias J.E."/>
            <person name="Goswami T."/>
            <person name="Rad R."/>
            <person name="Beausoleil S.A."/>
            <person name="Villen J."/>
            <person name="Haas W."/>
            <person name="Sowa M.E."/>
            <person name="Gygi S.P."/>
        </authorList>
    </citation>
    <scope>PHOSPHORYLATION [LARGE SCALE ANALYSIS] AT SER-1296</scope>
    <scope>IDENTIFICATION BY MASS SPECTROMETRY [LARGE SCALE ANALYSIS]</scope>
    <source>
        <tissue>Brain</tissue>
        <tissue>Brown adipose tissue</tissue>
        <tissue>Heart</tissue>
        <tissue>Kidney</tissue>
        <tissue>Liver</tissue>
        <tissue>Lung</tissue>
        <tissue>Spleen</tissue>
        <tissue>Testis</tissue>
    </source>
</reference>
<gene>
    <name evidence="10" type="primary">Abca1</name>
    <name type="synonym">Abc1</name>
</gene>
<dbReference type="EC" id="7.6.2.1" evidence="2"/>
<dbReference type="EMBL" id="X75926">
    <property type="protein sequence ID" value="CAA53530.1"/>
    <property type="status" value="ALT_INIT"/>
    <property type="molecule type" value="mRNA"/>
</dbReference>
<dbReference type="EMBL" id="AF287263">
    <property type="protein sequence ID" value="AAG39073.1"/>
    <property type="status" value="ALT_INIT"/>
    <property type="molecule type" value="Genomic_DNA"/>
</dbReference>
<dbReference type="EMBL" id="AL772397">
    <property type="status" value="NOT_ANNOTATED_CDS"/>
    <property type="molecule type" value="Genomic_DNA"/>
</dbReference>
<dbReference type="EMBL" id="AL807243">
    <property type="status" value="NOT_ANNOTATED_CDS"/>
    <property type="molecule type" value="Genomic_DNA"/>
</dbReference>
<dbReference type="EMBL" id="CH466565">
    <property type="protein sequence ID" value="EDL02285.1"/>
    <property type="molecule type" value="Genomic_DNA"/>
</dbReference>
<dbReference type="CCDS" id="CCDS18187.1"/>
<dbReference type="PIR" id="A54774">
    <property type="entry name" value="A54774"/>
</dbReference>
<dbReference type="RefSeq" id="NP_038482.3">
    <property type="nucleotide sequence ID" value="NM_013454.3"/>
</dbReference>
<dbReference type="SMR" id="P41233"/>
<dbReference type="BioGRID" id="197900">
    <property type="interactions" value="2"/>
</dbReference>
<dbReference type="CORUM" id="P41233"/>
<dbReference type="FunCoup" id="P41233">
    <property type="interactions" value="568"/>
</dbReference>
<dbReference type="IntAct" id="P41233">
    <property type="interactions" value="2"/>
</dbReference>
<dbReference type="STRING" id="10090.ENSMUSP00000030010"/>
<dbReference type="BindingDB" id="P41233"/>
<dbReference type="ChEMBL" id="CHEMBL1641361"/>
<dbReference type="TCDB" id="3.A.1.211.1">
    <property type="family name" value="the atp-binding cassette (abc) superfamily"/>
</dbReference>
<dbReference type="GlyConnect" id="2139">
    <property type="glycosylation" value="2 N-Linked glycans (1 site)"/>
</dbReference>
<dbReference type="GlyCosmos" id="P41233">
    <property type="glycosylation" value="22 sites, 2 glycans"/>
</dbReference>
<dbReference type="GlyGen" id="P41233">
    <property type="glycosylation" value="23 sites, 9 N-linked glycans (11 sites)"/>
</dbReference>
<dbReference type="iPTMnet" id="P41233"/>
<dbReference type="PhosphoSitePlus" id="P41233"/>
<dbReference type="SwissPalm" id="P41233"/>
<dbReference type="jPOST" id="P41233"/>
<dbReference type="PaxDb" id="10090-ENSMUSP00000030010"/>
<dbReference type="PeptideAtlas" id="P41233"/>
<dbReference type="ProteomicsDB" id="285949"/>
<dbReference type="Antibodypedia" id="14760">
    <property type="antibodies" value="588 antibodies from 38 providers"/>
</dbReference>
<dbReference type="DNASU" id="11303"/>
<dbReference type="Ensembl" id="ENSMUST00000030010.4">
    <property type="protein sequence ID" value="ENSMUSP00000030010.4"/>
    <property type="gene ID" value="ENSMUSG00000015243.5"/>
</dbReference>
<dbReference type="GeneID" id="11303"/>
<dbReference type="KEGG" id="mmu:11303"/>
<dbReference type="UCSC" id="uc008swu.1">
    <property type="organism name" value="mouse"/>
</dbReference>
<dbReference type="AGR" id="MGI:99607"/>
<dbReference type="CTD" id="19"/>
<dbReference type="MGI" id="MGI:99607">
    <property type="gene designation" value="Abca1"/>
</dbReference>
<dbReference type="VEuPathDB" id="HostDB:ENSMUSG00000015243"/>
<dbReference type="eggNOG" id="KOG0059">
    <property type="taxonomic scope" value="Eukaryota"/>
</dbReference>
<dbReference type="GeneTree" id="ENSGT00940000154658"/>
<dbReference type="HOGENOM" id="CLU_000604_19_0_1"/>
<dbReference type="InParanoid" id="P41233"/>
<dbReference type="OMA" id="AWQDYIS"/>
<dbReference type="OrthoDB" id="8061355at2759"/>
<dbReference type="PhylomeDB" id="P41233"/>
<dbReference type="TreeFam" id="TF105191"/>
<dbReference type="Reactome" id="R-MMU-8963896">
    <property type="pathway name" value="HDL assembly"/>
</dbReference>
<dbReference type="Reactome" id="R-MMU-9029569">
    <property type="pathway name" value="NR1H3 &amp; NR1H2 regulate gene expression linked to cholesterol transport and efflux"/>
</dbReference>
<dbReference type="BioGRID-ORCS" id="11303">
    <property type="hits" value="5 hits in 79 CRISPR screens"/>
</dbReference>
<dbReference type="ChiTaRS" id="Abca1">
    <property type="organism name" value="mouse"/>
</dbReference>
<dbReference type="PRO" id="PR:P41233"/>
<dbReference type="Proteomes" id="UP000000589">
    <property type="component" value="Chromosome 4"/>
</dbReference>
<dbReference type="RNAct" id="P41233">
    <property type="molecule type" value="protein"/>
</dbReference>
<dbReference type="Bgee" id="ENSMUSG00000015243">
    <property type="expression patterns" value="Expressed in stroma of bone marrow and 256 other cell types or tissues"/>
</dbReference>
<dbReference type="GO" id="GO:0016323">
    <property type="term" value="C:basolateral plasma membrane"/>
    <property type="evidence" value="ECO:0007669"/>
    <property type="project" value="Ensembl"/>
</dbReference>
<dbReference type="GO" id="GO:0005768">
    <property type="term" value="C:endosome"/>
    <property type="evidence" value="ECO:0000250"/>
    <property type="project" value="UniProtKB"/>
</dbReference>
<dbReference type="GO" id="GO:0009897">
    <property type="term" value="C:external side of plasma membrane"/>
    <property type="evidence" value="ECO:0000314"/>
    <property type="project" value="MGI"/>
</dbReference>
<dbReference type="GO" id="GO:0005794">
    <property type="term" value="C:Golgi apparatus"/>
    <property type="evidence" value="ECO:0000314"/>
    <property type="project" value="MGI"/>
</dbReference>
<dbReference type="GO" id="GO:0043231">
    <property type="term" value="C:intracellular membrane-bounded organelle"/>
    <property type="evidence" value="ECO:0000314"/>
    <property type="project" value="MGI"/>
</dbReference>
<dbReference type="GO" id="GO:0045121">
    <property type="term" value="C:membrane raft"/>
    <property type="evidence" value="ECO:0007669"/>
    <property type="project" value="Ensembl"/>
</dbReference>
<dbReference type="GO" id="GO:0048471">
    <property type="term" value="C:perinuclear region of cytoplasm"/>
    <property type="evidence" value="ECO:0007669"/>
    <property type="project" value="Ensembl"/>
</dbReference>
<dbReference type="GO" id="GO:0045335">
    <property type="term" value="C:phagocytic vesicle"/>
    <property type="evidence" value="ECO:0007669"/>
    <property type="project" value="Ensembl"/>
</dbReference>
<dbReference type="GO" id="GO:0005886">
    <property type="term" value="C:plasma membrane"/>
    <property type="evidence" value="ECO:0000314"/>
    <property type="project" value="MGI"/>
</dbReference>
<dbReference type="GO" id="GO:0140359">
    <property type="term" value="F:ABC-type transporter activity"/>
    <property type="evidence" value="ECO:0007669"/>
    <property type="project" value="InterPro"/>
</dbReference>
<dbReference type="GO" id="GO:0034186">
    <property type="term" value="F:apolipoprotein A-I binding"/>
    <property type="evidence" value="ECO:0007669"/>
    <property type="project" value="Ensembl"/>
</dbReference>
<dbReference type="GO" id="GO:0034188">
    <property type="term" value="F:apolipoprotein A-I receptor activity"/>
    <property type="evidence" value="ECO:0007669"/>
    <property type="project" value="Ensembl"/>
</dbReference>
<dbReference type="GO" id="GO:0005524">
    <property type="term" value="F:ATP binding"/>
    <property type="evidence" value="ECO:0007669"/>
    <property type="project" value="UniProtKB-KW"/>
</dbReference>
<dbReference type="GO" id="GO:0016887">
    <property type="term" value="F:ATP hydrolysis activity"/>
    <property type="evidence" value="ECO:0007669"/>
    <property type="project" value="InterPro"/>
</dbReference>
<dbReference type="GO" id="GO:0051117">
    <property type="term" value="F:ATPase binding"/>
    <property type="evidence" value="ECO:0007669"/>
    <property type="project" value="Ensembl"/>
</dbReference>
<dbReference type="GO" id="GO:0120020">
    <property type="term" value="F:cholesterol transfer activity"/>
    <property type="evidence" value="ECO:0000314"/>
    <property type="project" value="MGI"/>
</dbReference>
<dbReference type="GO" id="GO:0140328">
    <property type="term" value="F:floppase activity"/>
    <property type="evidence" value="ECO:0000250"/>
    <property type="project" value="UniProtKB"/>
</dbReference>
<dbReference type="GO" id="GO:0008035">
    <property type="term" value="F:high-density lipoprotein particle binding"/>
    <property type="evidence" value="ECO:0007669"/>
    <property type="project" value="Ensembl"/>
</dbReference>
<dbReference type="GO" id="GO:0031210">
    <property type="term" value="F:phosphatidylcholine binding"/>
    <property type="evidence" value="ECO:0007669"/>
    <property type="project" value="Ensembl"/>
</dbReference>
<dbReference type="GO" id="GO:0090554">
    <property type="term" value="F:phosphatidylcholine floppase activity"/>
    <property type="evidence" value="ECO:0000250"/>
    <property type="project" value="UniProtKB"/>
</dbReference>
<dbReference type="GO" id="GO:0090556">
    <property type="term" value="F:phosphatidylserine floppase activity"/>
    <property type="evidence" value="ECO:0007669"/>
    <property type="project" value="Ensembl"/>
</dbReference>
<dbReference type="GO" id="GO:0005548">
    <property type="term" value="F:phospholipid transporter activity"/>
    <property type="evidence" value="ECO:0000314"/>
    <property type="project" value="MGI"/>
</dbReference>
<dbReference type="GO" id="GO:0008320">
    <property type="term" value="F:protein transmembrane transporter activity"/>
    <property type="evidence" value="ECO:0000315"/>
    <property type="project" value="ARUK-UCL"/>
</dbReference>
<dbReference type="GO" id="GO:0005102">
    <property type="term" value="F:signaling receptor binding"/>
    <property type="evidence" value="ECO:0007669"/>
    <property type="project" value="Ensembl"/>
</dbReference>
<dbReference type="GO" id="GO:0031267">
    <property type="term" value="F:small GTPase binding"/>
    <property type="evidence" value="ECO:0007669"/>
    <property type="project" value="Ensembl"/>
</dbReference>
<dbReference type="GO" id="GO:0046623">
    <property type="term" value="F:sphingolipid floppase activity"/>
    <property type="evidence" value="ECO:0007669"/>
    <property type="project" value="Ensembl"/>
</dbReference>
<dbReference type="GO" id="GO:0019905">
    <property type="term" value="F:syntaxin binding"/>
    <property type="evidence" value="ECO:0007669"/>
    <property type="project" value="Ensembl"/>
</dbReference>
<dbReference type="GO" id="GO:0007189">
    <property type="term" value="P:adenylate cyclase-activating G protein-coupled receptor signaling pathway"/>
    <property type="evidence" value="ECO:0007669"/>
    <property type="project" value="Ensembl"/>
</dbReference>
<dbReference type="GO" id="GO:0071397">
    <property type="term" value="P:cellular response to cholesterol"/>
    <property type="evidence" value="ECO:0007669"/>
    <property type="project" value="Ensembl"/>
</dbReference>
<dbReference type="GO" id="GO:0071345">
    <property type="term" value="P:cellular response to cytokine stimulus"/>
    <property type="evidence" value="ECO:0007669"/>
    <property type="project" value="Ensembl"/>
</dbReference>
<dbReference type="GO" id="GO:0071222">
    <property type="term" value="P:cellular response to lipopolysaccharide"/>
    <property type="evidence" value="ECO:0000314"/>
    <property type="project" value="UniProtKB"/>
</dbReference>
<dbReference type="GO" id="GO:0071300">
    <property type="term" value="P:cellular response to retinoic acid"/>
    <property type="evidence" value="ECO:0000314"/>
    <property type="project" value="UniProtKB"/>
</dbReference>
<dbReference type="GO" id="GO:0071466">
    <property type="term" value="P:cellular response to xenobiotic stimulus"/>
    <property type="evidence" value="ECO:0007669"/>
    <property type="project" value="Ensembl"/>
</dbReference>
<dbReference type="GO" id="GO:0033344">
    <property type="term" value="P:cholesterol efflux"/>
    <property type="evidence" value="ECO:0000314"/>
    <property type="project" value="MGI"/>
</dbReference>
<dbReference type="GO" id="GO:0042632">
    <property type="term" value="P:cholesterol homeostasis"/>
    <property type="evidence" value="ECO:0007669"/>
    <property type="project" value="Ensembl"/>
</dbReference>
<dbReference type="GO" id="GO:0008203">
    <property type="term" value="P:cholesterol metabolic process"/>
    <property type="evidence" value="ECO:0000314"/>
    <property type="project" value="MGI"/>
</dbReference>
<dbReference type="GO" id="GO:0016197">
    <property type="term" value="P:endosomal transport"/>
    <property type="evidence" value="ECO:0007669"/>
    <property type="project" value="Ensembl"/>
</dbReference>
<dbReference type="GO" id="GO:0051649">
    <property type="term" value="P:establishment of localization in cell"/>
    <property type="evidence" value="ECO:0000315"/>
    <property type="project" value="MGI"/>
</dbReference>
<dbReference type="GO" id="GO:0140115">
    <property type="term" value="P:export across plasma membrane"/>
    <property type="evidence" value="ECO:0000315"/>
    <property type="project" value="ARUK-UCL"/>
</dbReference>
<dbReference type="GO" id="GO:0034380">
    <property type="term" value="P:high-density lipoprotein particle assembly"/>
    <property type="evidence" value="ECO:0007669"/>
    <property type="project" value="Ensembl"/>
</dbReference>
<dbReference type="GO" id="GO:0032367">
    <property type="term" value="P:intracellular cholesterol transport"/>
    <property type="evidence" value="ECO:0007669"/>
    <property type="project" value="Ensembl"/>
</dbReference>
<dbReference type="GO" id="GO:0042158">
    <property type="term" value="P:lipoprotein biosynthetic process"/>
    <property type="evidence" value="ECO:0000315"/>
    <property type="project" value="MGI"/>
</dbReference>
<dbReference type="GO" id="GO:0042157">
    <property type="term" value="P:lipoprotein metabolic process"/>
    <property type="evidence" value="ECO:0000315"/>
    <property type="project" value="MGI"/>
</dbReference>
<dbReference type="GO" id="GO:0007040">
    <property type="term" value="P:lysosome organization"/>
    <property type="evidence" value="ECO:0007669"/>
    <property type="project" value="Ensembl"/>
</dbReference>
<dbReference type="GO" id="GO:0002790">
    <property type="term" value="P:peptide secretion"/>
    <property type="evidence" value="ECO:0000315"/>
    <property type="project" value="MGI"/>
</dbReference>
<dbReference type="GO" id="GO:0006911">
    <property type="term" value="P:phagocytosis, engulfment"/>
    <property type="evidence" value="ECO:0000315"/>
    <property type="project" value="MGI"/>
</dbReference>
<dbReference type="GO" id="GO:0033700">
    <property type="term" value="P:phospholipid efflux"/>
    <property type="evidence" value="ECO:0000314"/>
    <property type="project" value="MGI"/>
</dbReference>
<dbReference type="GO" id="GO:0055091">
    <property type="term" value="P:phospholipid homeostasis"/>
    <property type="evidence" value="ECO:0007669"/>
    <property type="project" value="Ensembl"/>
</dbReference>
<dbReference type="GO" id="GO:0045332">
    <property type="term" value="P:phospholipid translocation"/>
    <property type="evidence" value="ECO:0000315"/>
    <property type="project" value="MGI"/>
</dbReference>
<dbReference type="GO" id="GO:0060155">
    <property type="term" value="P:platelet dense granule organization"/>
    <property type="evidence" value="ECO:0007669"/>
    <property type="project" value="Ensembl"/>
</dbReference>
<dbReference type="GO" id="GO:0010875">
    <property type="term" value="P:positive regulation of cholesterol efflux"/>
    <property type="evidence" value="ECO:0000315"/>
    <property type="project" value="BHF-UCL"/>
</dbReference>
<dbReference type="GO" id="GO:0090108">
    <property type="term" value="P:positive regulation of high-density lipoprotein particle assembly"/>
    <property type="evidence" value="ECO:0000315"/>
    <property type="project" value="UniProtKB"/>
</dbReference>
<dbReference type="GO" id="GO:0009306">
    <property type="term" value="P:protein secretion"/>
    <property type="evidence" value="ECO:0000315"/>
    <property type="project" value="ARUK-UCL"/>
</dbReference>
<dbReference type="GO" id="GO:0071806">
    <property type="term" value="P:protein transmembrane transport"/>
    <property type="evidence" value="ECO:0000315"/>
    <property type="project" value="ARUK-UCL"/>
</dbReference>
<dbReference type="GO" id="GO:0032489">
    <property type="term" value="P:regulation of Cdc42 protein signal transduction"/>
    <property type="evidence" value="ECO:0007669"/>
    <property type="project" value="Ensembl"/>
</dbReference>
<dbReference type="GO" id="GO:0034616">
    <property type="term" value="P:response to laminar fluid shear stress"/>
    <property type="evidence" value="ECO:0007669"/>
    <property type="project" value="Ensembl"/>
</dbReference>
<dbReference type="GO" id="GO:0033552">
    <property type="term" value="P:response to vitamin B3"/>
    <property type="evidence" value="ECO:0007669"/>
    <property type="project" value="Ensembl"/>
</dbReference>
<dbReference type="GO" id="GO:0043691">
    <property type="term" value="P:reverse cholesterol transport"/>
    <property type="evidence" value="ECO:0000315"/>
    <property type="project" value="BHF-UCL"/>
</dbReference>
<dbReference type="GO" id="GO:0023061">
    <property type="term" value="P:signal release"/>
    <property type="evidence" value="ECO:0000315"/>
    <property type="project" value="ARUK-UCL"/>
</dbReference>
<dbReference type="CDD" id="cd03263">
    <property type="entry name" value="ABC_subfamily_A"/>
    <property type="match status" value="2"/>
</dbReference>
<dbReference type="FunFam" id="3.40.50.300:FF:000232">
    <property type="entry name" value="ATP-binding cassette, sub-family A (ABC1), member 1"/>
    <property type="match status" value="1"/>
</dbReference>
<dbReference type="FunFam" id="3.40.50.300:FF:000264">
    <property type="entry name" value="ATP-binding cassette, sub-family A (ABC1), member 1"/>
    <property type="match status" value="1"/>
</dbReference>
<dbReference type="Gene3D" id="3.40.50.300">
    <property type="entry name" value="P-loop containing nucleotide triphosphate hydrolases"/>
    <property type="match status" value="2"/>
</dbReference>
<dbReference type="InterPro" id="IPR003593">
    <property type="entry name" value="AAA+_ATPase"/>
</dbReference>
<dbReference type="InterPro" id="IPR013525">
    <property type="entry name" value="ABC2_TM"/>
</dbReference>
<dbReference type="InterPro" id="IPR003439">
    <property type="entry name" value="ABC_transporter-like_ATP-bd"/>
</dbReference>
<dbReference type="InterPro" id="IPR017871">
    <property type="entry name" value="ABC_transporter-like_CS"/>
</dbReference>
<dbReference type="InterPro" id="IPR026082">
    <property type="entry name" value="ABCA"/>
</dbReference>
<dbReference type="InterPro" id="IPR027417">
    <property type="entry name" value="P-loop_NTPase"/>
</dbReference>
<dbReference type="InterPro" id="IPR056264">
    <property type="entry name" value="R2_ABCA1-4-like"/>
</dbReference>
<dbReference type="PANTHER" id="PTHR19229:SF250">
    <property type="entry name" value="ABC TRANSPORTER DOMAIN-CONTAINING PROTEIN-RELATED"/>
    <property type="match status" value="1"/>
</dbReference>
<dbReference type="PANTHER" id="PTHR19229">
    <property type="entry name" value="ATP-BINDING CASSETTE TRANSPORTER SUBFAMILY A ABCA"/>
    <property type="match status" value="1"/>
</dbReference>
<dbReference type="Pfam" id="PF12698">
    <property type="entry name" value="ABC2_membrane_3"/>
    <property type="match status" value="2"/>
</dbReference>
<dbReference type="Pfam" id="PF00005">
    <property type="entry name" value="ABC_tran"/>
    <property type="match status" value="2"/>
</dbReference>
<dbReference type="Pfam" id="PF23321">
    <property type="entry name" value="R1_ABCA1"/>
    <property type="match status" value="1"/>
</dbReference>
<dbReference type="SMART" id="SM00382">
    <property type="entry name" value="AAA"/>
    <property type="match status" value="2"/>
</dbReference>
<dbReference type="SUPFAM" id="SSF52540">
    <property type="entry name" value="P-loop containing nucleoside triphosphate hydrolases"/>
    <property type="match status" value="2"/>
</dbReference>
<dbReference type="PROSITE" id="PS00211">
    <property type="entry name" value="ABC_TRANSPORTER_1"/>
    <property type="match status" value="1"/>
</dbReference>
<dbReference type="PROSITE" id="PS50893">
    <property type="entry name" value="ABC_TRANSPORTER_2"/>
    <property type="match status" value="2"/>
</dbReference>
<feature type="chain" id="PRO_0000093289" description="Phospholipid-transporting ATPase ABCA1">
    <location>
        <begin position="1"/>
        <end position="2261"/>
    </location>
</feature>
<feature type="transmembrane region" description="Helical" evidence="3">
    <location>
        <begin position="22"/>
        <end position="42"/>
    </location>
</feature>
<feature type="topological domain" description="Extracellular" evidence="1">
    <location>
        <begin position="43"/>
        <end position="639"/>
    </location>
</feature>
<feature type="transmembrane region" description="Helical" evidence="3">
    <location>
        <begin position="640"/>
        <end position="660"/>
    </location>
</feature>
<feature type="transmembrane region" description="Helical" evidence="3">
    <location>
        <begin position="683"/>
        <end position="703"/>
    </location>
</feature>
<feature type="transmembrane region" description="Helical" evidence="3">
    <location>
        <begin position="716"/>
        <end position="736"/>
    </location>
</feature>
<feature type="transmembrane region" description="Helical" evidence="3">
    <location>
        <begin position="745"/>
        <end position="765"/>
    </location>
</feature>
<feature type="transmembrane region" description="Helical" evidence="3">
    <location>
        <begin position="777"/>
        <end position="797"/>
    </location>
</feature>
<feature type="transmembrane region" description="Helical" evidence="3">
    <location>
        <begin position="827"/>
        <end position="847"/>
    </location>
</feature>
<feature type="transmembrane region" description="Helical" evidence="3">
    <location>
        <begin position="941"/>
        <end position="961"/>
    </location>
</feature>
<feature type="transmembrane region" description="Helical" evidence="3">
    <location>
        <begin position="1351"/>
        <end position="1371"/>
    </location>
</feature>
<feature type="topological domain" description="Extracellular" evidence="1">
    <location>
        <begin position="1372"/>
        <end position="1656"/>
    </location>
</feature>
<feature type="transmembrane region" description="Helical" evidence="3">
    <location>
        <begin position="1657"/>
        <end position="1677"/>
    </location>
</feature>
<feature type="transmembrane region" description="Helical" evidence="3">
    <location>
        <begin position="1703"/>
        <end position="1723"/>
    </location>
</feature>
<feature type="transmembrane region" description="Helical" evidence="3">
    <location>
        <begin position="1735"/>
        <end position="1755"/>
    </location>
</feature>
<feature type="transmembrane region" description="Helical" evidence="3">
    <location>
        <begin position="1768"/>
        <end position="1788"/>
    </location>
</feature>
<feature type="transmembrane region" description="Helical" evidence="3">
    <location>
        <begin position="1802"/>
        <end position="1822"/>
    </location>
</feature>
<feature type="transmembrane region" description="Helical" evidence="3">
    <location>
        <begin position="1852"/>
        <end position="1872"/>
    </location>
</feature>
<feature type="domain" description="ABC transporter 1" evidence="4">
    <location>
        <begin position="899"/>
        <end position="1131"/>
    </location>
</feature>
<feature type="domain" description="ABC transporter 2" evidence="4">
    <location>
        <begin position="1912"/>
        <end position="2144"/>
    </location>
</feature>
<feature type="region of interest" description="Annulus domain 1" evidence="2">
    <location>
        <begin position="69"/>
        <end position="80"/>
    </location>
</feature>
<feature type="region of interest" description="Annulus domain 2" evidence="2">
    <location>
        <begin position="368"/>
        <end position="379"/>
    </location>
</feature>
<feature type="region of interest" description="Gateway domain" evidence="2">
    <location>
        <begin position="564"/>
        <end position="594"/>
    </location>
</feature>
<feature type="region of interest" description="Disordered" evidence="5">
    <location>
        <begin position="1285"/>
        <end position="1310"/>
    </location>
</feature>
<feature type="compositionally biased region" description="Acidic residues" evidence="5">
    <location>
        <begin position="1287"/>
        <end position="1299"/>
    </location>
</feature>
<feature type="binding site" evidence="4">
    <location>
        <begin position="933"/>
        <end position="940"/>
    </location>
    <ligand>
        <name>ATP</name>
        <dbReference type="ChEBI" id="CHEBI:30616"/>
        <label>1</label>
    </ligand>
</feature>
<feature type="binding site" evidence="4">
    <location>
        <begin position="1946"/>
        <end position="1953"/>
    </location>
    <ligand>
        <name>ATP</name>
        <dbReference type="ChEBI" id="CHEBI:30616"/>
        <label>2</label>
    </ligand>
</feature>
<feature type="modified residue" description="Phosphoserine; by PKA" evidence="2">
    <location>
        <position position="1042"/>
    </location>
</feature>
<feature type="modified residue" description="Phosphoserine" evidence="11 12">
    <location>
        <position position="1296"/>
    </location>
</feature>
<feature type="modified residue" description="Phosphoserine; by PKA" evidence="2">
    <location>
        <position position="2054"/>
    </location>
</feature>
<feature type="lipid moiety-binding region" description="S-palmitoyl cysteine" evidence="1">
    <location>
        <position position="3"/>
    </location>
</feature>
<feature type="lipid moiety-binding region" description="S-palmitoyl cysteine" evidence="1">
    <location>
        <position position="23"/>
    </location>
</feature>
<feature type="lipid moiety-binding region" description="S-palmitoyl cysteine" evidence="1">
    <location>
        <position position="1110"/>
    </location>
</feature>
<feature type="lipid moiety-binding region" description="S-palmitoyl cysteine" evidence="1">
    <location>
        <position position="1111"/>
    </location>
</feature>
<feature type="glycosylation site" description="N-linked (GlcNAc...) asparagine" evidence="3">
    <location>
        <position position="14"/>
    </location>
</feature>
<feature type="glycosylation site" description="N-linked (GlcNAc...) asparagine" evidence="3">
    <location>
        <position position="98"/>
    </location>
</feature>
<feature type="glycosylation site" description="N-linked (GlcNAc...) asparagine" evidence="3">
    <location>
        <position position="151"/>
    </location>
</feature>
<feature type="glycosylation site" description="N-linked (GlcNAc...) asparagine" evidence="3">
    <location>
        <position position="161"/>
    </location>
</feature>
<feature type="glycosylation site" description="N-linked (GlcNAc...) asparagine" evidence="3">
    <location>
        <position position="196"/>
    </location>
</feature>
<feature type="glycosylation site" description="N-linked (GlcNAc...) asparagine" evidence="3">
    <location>
        <position position="244"/>
    </location>
</feature>
<feature type="glycosylation site" description="N-linked (GlcNAc...) asparagine" evidence="3">
    <location>
        <position position="292"/>
    </location>
</feature>
<feature type="glycosylation site" description="N-linked (GlcNAc...) asparagine" evidence="3">
    <location>
        <position position="337"/>
    </location>
</feature>
<feature type="glycosylation site" description="N-linked (GlcNAc...) asparagine" evidence="3">
    <location>
        <position position="349"/>
    </location>
</feature>
<feature type="glycosylation site" description="N-linked (GlcNAc...) asparagine" evidence="3">
    <location>
        <position position="400"/>
    </location>
</feature>
<feature type="glycosylation site" description="N-linked (GlcNAc...) asparagine" evidence="3">
    <location>
        <position position="478"/>
    </location>
</feature>
<feature type="glycosylation site" description="N-linked (GlcNAc...) asparagine" evidence="8">
    <location>
        <position position="489"/>
    </location>
</feature>
<feature type="glycosylation site" description="N-linked (GlcNAc...) asparagine" evidence="3">
    <location>
        <position position="521"/>
    </location>
</feature>
<feature type="glycosylation site" description="N-linked (GlcNAc...) asparagine" evidence="3">
    <location>
        <position position="820"/>
    </location>
</feature>
<feature type="glycosylation site" description="N-linked (GlcNAc...) asparagine" evidence="3">
    <location>
        <position position="1144"/>
    </location>
</feature>
<feature type="glycosylation site" description="N-linked (GlcNAc...) asparagine" evidence="3">
    <location>
        <position position="1294"/>
    </location>
</feature>
<feature type="glycosylation site" description="N-linked (GlcNAc...) asparagine" evidence="3">
    <location>
        <position position="1453"/>
    </location>
</feature>
<feature type="glycosylation site" description="N-linked (GlcNAc...) asparagine" evidence="3">
    <location>
        <position position="1499"/>
    </location>
</feature>
<feature type="glycosylation site" description="N-linked (GlcNAc...) asparagine" evidence="3">
    <location>
        <position position="1504"/>
    </location>
</feature>
<feature type="glycosylation site" description="N-linked (GlcNAc...) asparagine" evidence="3">
    <location>
        <position position="1637"/>
    </location>
</feature>
<feature type="glycosylation site" description="N-linked (GlcNAc...) asparagine" evidence="3">
    <location>
        <position position="2044"/>
    </location>
</feature>
<feature type="glycosylation site" description="N-linked (GlcNAc...) asparagine" evidence="3">
    <location>
        <position position="2238"/>
    </location>
</feature>
<feature type="disulfide bond" evidence="1">
    <location>
        <begin position="75"/>
        <end position="309"/>
    </location>
</feature>
<feature type="disulfide bond" evidence="1">
    <location>
        <begin position="1463"/>
        <end position="1477"/>
    </location>
</feature>
<feature type="sequence conflict" description="In Ref. 2; AAG39073." evidence="9" ref="2">
    <location>
        <begin position="1567"/>
        <end position="1568"/>
    </location>
</feature>
<feature type="sequence conflict" description="In Ref. 1; CAA53530." evidence="9" ref="1">
    <original>S</original>
    <variation>T</variation>
    <location>
        <position position="1568"/>
    </location>
</feature>
<feature type="sequence conflict" description="In Ref. 1; CAA53530." evidence="9" ref="1">
    <original>V</original>
    <variation>F</variation>
    <location>
        <position position="2024"/>
    </location>
</feature>
<feature type="sequence conflict" description="In Ref. 2; AAG39073." evidence="9" ref="2">
    <location>
        <position position="2024"/>
    </location>
</feature>
<keyword id="KW-0067">ATP-binding</keyword>
<keyword id="KW-1003">Cell membrane</keyword>
<keyword id="KW-1015">Disulfide bond</keyword>
<keyword id="KW-0967">Endosome</keyword>
<keyword id="KW-0325">Glycoprotein</keyword>
<keyword id="KW-0449">Lipoprotein</keyword>
<keyword id="KW-0472">Membrane</keyword>
<keyword id="KW-0547">Nucleotide-binding</keyword>
<keyword id="KW-0564">Palmitate</keyword>
<keyword id="KW-0597">Phosphoprotein</keyword>
<keyword id="KW-1185">Reference proteome</keyword>
<keyword id="KW-0677">Repeat</keyword>
<keyword id="KW-1278">Translocase</keyword>
<keyword id="KW-0812">Transmembrane</keyword>
<keyword id="KW-1133">Transmembrane helix</keyword>
<keyword id="KW-0813">Transport</keyword>
<comment type="function">
    <text evidence="2">Catalyzes the translocation of specific phospholipids from the cytoplasmic to the extracellular/lumenal leaflet of membrane coupled to the hydrolysis of ATP. Thereby, participates in phospholipid transfer to apolipoproteins to form nascent high density lipoproteins/HDLs. Transports preferentially phosphatidylcholine over phosphatidylserine. May play a similar role in the efflux of intracellular cholesterol to apolipoproteins and the formation of nascent high density lipoproteins/HDLs. Translocates phospholipids from the outer face of the plasma membrane and forces it through its gateway and annulus into an elongated hydrophobic tunnel in its extracellular domain.</text>
</comment>
<comment type="catalytic activity">
    <reaction evidence="2">
        <text>ATP + H2O + phospholipidSide 1 = ADP + phosphate + phospholipidSide 2.</text>
        <dbReference type="EC" id="7.6.2.1"/>
    </reaction>
</comment>
<comment type="catalytic activity">
    <reaction evidence="2">
        <text>a 1,2-diacyl-sn-glycero-3-phosphocholine(out) + ATP + H2O = a 1,2-diacyl-sn-glycero-3-phosphocholine(in) + ADP + phosphate + H(+)</text>
        <dbReference type="Rhea" id="RHEA:38583"/>
        <dbReference type="ChEBI" id="CHEBI:15377"/>
        <dbReference type="ChEBI" id="CHEBI:15378"/>
        <dbReference type="ChEBI" id="CHEBI:30616"/>
        <dbReference type="ChEBI" id="CHEBI:43474"/>
        <dbReference type="ChEBI" id="CHEBI:57643"/>
        <dbReference type="ChEBI" id="CHEBI:456216"/>
    </reaction>
    <physiologicalReaction direction="right-to-left" evidence="2">
        <dbReference type="Rhea" id="RHEA:38585"/>
    </physiologicalReaction>
</comment>
<comment type="catalytic activity">
    <reaction evidence="2">
        <text>a 1,2-diacyl-sn-glycero-3-phospho-L-serine(out) + ATP + H2O = a 1,2-diacyl-sn-glycero-3-phospho-L-serine(in) + ADP + phosphate + H(+)</text>
        <dbReference type="Rhea" id="RHEA:38567"/>
        <dbReference type="ChEBI" id="CHEBI:15377"/>
        <dbReference type="ChEBI" id="CHEBI:15378"/>
        <dbReference type="ChEBI" id="CHEBI:30616"/>
        <dbReference type="ChEBI" id="CHEBI:43474"/>
        <dbReference type="ChEBI" id="CHEBI:57262"/>
        <dbReference type="ChEBI" id="CHEBI:456216"/>
    </reaction>
    <physiologicalReaction direction="right-to-left" evidence="2">
        <dbReference type="Rhea" id="RHEA:38569"/>
    </physiologicalReaction>
</comment>
<comment type="catalytic activity">
    <reaction evidence="2">
        <text>a sphingomyelin(in) + ATP + H2O = a sphingomyelin(out) + ADP + phosphate + H(+)</text>
        <dbReference type="Rhea" id="RHEA:38903"/>
        <dbReference type="ChEBI" id="CHEBI:15377"/>
        <dbReference type="ChEBI" id="CHEBI:15378"/>
        <dbReference type="ChEBI" id="CHEBI:17636"/>
        <dbReference type="ChEBI" id="CHEBI:30616"/>
        <dbReference type="ChEBI" id="CHEBI:43474"/>
        <dbReference type="ChEBI" id="CHEBI:456216"/>
    </reaction>
    <physiologicalReaction direction="left-to-right" evidence="2">
        <dbReference type="Rhea" id="RHEA:38904"/>
    </physiologicalReaction>
</comment>
<comment type="catalytic activity">
    <reaction evidence="2">
        <text>cholesterol(in) + ATP + H2O = cholesterol(out) + ADP + phosphate + H(+)</text>
        <dbReference type="Rhea" id="RHEA:39051"/>
        <dbReference type="ChEBI" id="CHEBI:15377"/>
        <dbReference type="ChEBI" id="CHEBI:15378"/>
        <dbReference type="ChEBI" id="CHEBI:16113"/>
        <dbReference type="ChEBI" id="CHEBI:30616"/>
        <dbReference type="ChEBI" id="CHEBI:43474"/>
        <dbReference type="ChEBI" id="CHEBI:456216"/>
    </reaction>
    <physiologicalReaction direction="left-to-right" evidence="2">
        <dbReference type="Rhea" id="RHEA:39052"/>
    </physiologicalReaction>
</comment>
<comment type="activity regulation">
    <text evidence="2">ATPase activity is decreased by cholesterol and ceramide. ATPase activity is stimulated by phosphatidylcholine and to a lesser degree by phosphatidylserine and sphingomyelin. Phospholipid translocase activity is highly reduced by berylium fluoride and aluminum flouride and reduced by N-ethylmaleimide.</text>
</comment>
<comment type="subunit">
    <text evidence="2 7">Interacts with MEGF10 (PubMed:17205124). May interact with APOE1; functionally associated with APOE1 in the biogenesis of HDLs (By similarity). Interacts with ABCA8; this interaction potentiates cholesterol efflux (By similarity). Interacts with ABCA12 and NR1H2; this interaction is required for ABCA1 localization to the cell surface and is necessary for its normal activity and stability (By similarity).</text>
</comment>
<comment type="subcellular location">
    <subcellularLocation>
        <location evidence="2">Cell membrane</location>
        <topology evidence="3">Multi-pass membrane protein</topology>
    </subcellularLocation>
    <subcellularLocation>
        <location evidence="2">Endosome</location>
    </subcellularLocation>
</comment>
<comment type="tissue specificity">
    <text>Widely expressed in adult tissues. Highest levels are found in pregnant uterus and uterus.</text>
</comment>
<comment type="induction">
    <text evidence="6">Down-regulated by endotoxins (LPS) or cytokines (TNF and IL-1) in J774 macrophages. The down-regulation by endotoxin in macrophages is not likely to be mediated by the liver X receptor/retinoic X receptor (LXR/RXR).</text>
</comment>
<comment type="domain">
    <text>Multifunctional polypeptide with two homologous halves, each containing a hydrophobic membrane-anchoring domain and an ATP binding cassette (ABC) domain.</text>
</comment>
<comment type="PTM">
    <text evidence="2">Phosphorylation on Ser-2054 regulates phospholipid efflux.</text>
</comment>
<comment type="PTM">
    <text evidence="2">Palmitoylated by ZDHHC8. Palmitoylation is essential for localization to the plasma membrane.</text>
</comment>
<comment type="similarity">
    <text evidence="9">Belongs to the ABC transporter superfamily. ABCA family.</text>
</comment>
<comment type="sequence caution" evidence="9">
    <conflict type="erroneous initiation">
        <sequence resource="EMBL-CDS" id="AAG39073"/>
    </conflict>
    <text>Truncated N-terminus.</text>
</comment>
<comment type="sequence caution" evidence="9">
    <conflict type="erroneous initiation">
        <sequence resource="EMBL-CDS" id="CAA53530"/>
    </conflict>
    <text>Truncated N-terminus.</text>
</comment>
<protein>
    <recommendedName>
        <fullName evidence="2">Phospholipid-transporting ATPase ABCA1</fullName>
        <ecNumber evidence="2">7.6.2.1</ecNumber>
    </recommendedName>
    <alternativeName>
        <fullName>ATP-binding cassette sub-family A member 1</fullName>
    </alternativeName>
    <alternativeName>
        <fullName>ATP-binding cassette transporter 1</fullName>
        <shortName>ABC-1</shortName>
        <shortName>ATP-binding cassette 1</shortName>
    </alternativeName>
</protein>
<evidence type="ECO:0000250" key="1"/>
<evidence type="ECO:0000250" key="2">
    <source>
        <dbReference type="UniProtKB" id="O95477"/>
    </source>
</evidence>
<evidence type="ECO:0000255" key="3"/>
<evidence type="ECO:0000255" key="4">
    <source>
        <dbReference type="PROSITE-ProRule" id="PRU00434"/>
    </source>
</evidence>
<evidence type="ECO:0000256" key="5">
    <source>
        <dbReference type="SAM" id="MobiDB-lite"/>
    </source>
</evidence>
<evidence type="ECO:0000269" key="6">
    <source>
    </source>
</evidence>
<evidence type="ECO:0000269" key="7">
    <source>
    </source>
</evidence>
<evidence type="ECO:0000269" key="8">
    <source>
    </source>
</evidence>
<evidence type="ECO:0000305" key="9"/>
<evidence type="ECO:0000312" key="10">
    <source>
        <dbReference type="MGI" id="MGI:99607"/>
    </source>
</evidence>
<evidence type="ECO:0007744" key="11">
    <source>
    </source>
</evidence>
<evidence type="ECO:0007744" key="12">
    <source>
    </source>
</evidence>